<organism>
    <name type="scientific">Thermomicrobium roseum (strain ATCC 27502 / DSM 5159 / P-2)</name>
    <dbReference type="NCBI Taxonomy" id="309801"/>
    <lineage>
        <taxon>Bacteria</taxon>
        <taxon>Pseudomonadati</taxon>
        <taxon>Thermomicrobiota</taxon>
        <taxon>Thermomicrobia</taxon>
        <taxon>Thermomicrobiales</taxon>
        <taxon>Thermomicrobiaceae</taxon>
        <taxon>Thermomicrobium</taxon>
    </lineage>
</organism>
<feature type="chain" id="PRO_1000149770" description="Putative nickel insertion protein">
    <location>
        <begin position="1"/>
        <end position="406"/>
    </location>
</feature>
<evidence type="ECO:0000255" key="1">
    <source>
        <dbReference type="HAMAP-Rule" id="MF_01074"/>
    </source>
</evidence>
<name>Y315_THERP</name>
<protein>
    <recommendedName>
        <fullName evidence="1">Putative nickel insertion protein</fullName>
    </recommendedName>
</protein>
<sequence length="406" mass="44295">MRVAYVDPFSGASGDMLLGALVDAGVPPEELADRLASALDVDGYRLVVERVVRRGLAGTQVRVIVEAAQPARDWAEIRDLLSASALPPRVKERALAVFRRLAEAEASVHSVPLESVHFHEVGAVDSIVDVVGVVWGFELLGVEEITCGPLPLSRGWVETAHGRLPVPAPATALLLAQAGAPLVPLDIEAELVTPTGAALLVELARFVRPAFLPERVGYGFGTRELPWPNALRLWIGEAFAVPSRLDEAELLLEANLDDMNPQFIEPLVDQLFAAGALDVYLTPIVMKRSRPAVIVSAICRAKDRPVLERVLFEHSTTFGVRGIPIERTKLARRSVAVATRWGEVAVKLKIVQDRIVDAVPEYRDCLAIHQRTGLPIREIWNEAARLAAVWIGQRVGEEDQEATLPE</sequence>
<reference key="1">
    <citation type="journal article" date="2009" name="PLoS ONE">
        <title>Complete genome sequence of the aerobic CO-oxidizing thermophile Thermomicrobium roseum.</title>
        <authorList>
            <person name="Wu D."/>
            <person name="Raymond J."/>
            <person name="Wu M."/>
            <person name="Chatterji S."/>
            <person name="Ren Q."/>
            <person name="Graham J.E."/>
            <person name="Bryant D.A."/>
            <person name="Robb F."/>
            <person name="Colman A."/>
            <person name="Tallon L.J."/>
            <person name="Badger J.H."/>
            <person name="Madupu R."/>
            <person name="Ward N.L."/>
            <person name="Eisen J.A."/>
        </authorList>
    </citation>
    <scope>NUCLEOTIDE SEQUENCE [LARGE SCALE GENOMIC DNA]</scope>
    <source>
        <strain>ATCC 27502 / DSM 5159 / P-2</strain>
    </source>
</reference>
<keyword id="KW-0533">Nickel</keyword>
<keyword id="KW-1185">Reference proteome</keyword>
<proteinExistence type="inferred from homology"/>
<dbReference type="EMBL" id="CP001275">
    <property type="protein sequence ID" value="ACM05343.1"/>
    <property type="molecule type" value="Genomic_DNA"/>
</dbReference>
<dbReference type="RefSeq" id="WP_012641723.1">
    <property type="nucleotide sequence ID" value="NC_011959.1"/>
</dbReference>
<dbReference type="SMR" id="B9KXX3"/>
<dbReference type="STRING" id="309801.trd_0315"/>
<dbReference type="KEGG" id="tro:trd_0315"/>
<dbReference type="eggNOG" id="COG1641">
    <property type="taxonomic scope" value="Bacteria"/>
</dbReference>
<dbReference type="HOGENOM" id="CLU_028523_2_1_0"/>
<dbReference type="OrthoDB" id="9765625at2"/>
<dbReference type="Proteomes" id="UP000000447">
    <property type="component" value="Chromosome"/>
</dbReference>
<dbReference type="GO" id="GO:0016829">
    <property type="term" value="F:lyase activity"/>
    <property type="evidence" value="ECO:0007669"/>
    <property type="project" value="UniProtKB-UniRule"/>
</dbReference>
<dbReference type="GO" id="GO:0016151">
    <property type="term" value="F:nickel cation binding"/>
    <property type="evidence" value="ECO:0007669"/>
    <property type="project" value="UniProtKB-UniRule"/>
</dbReference>
<dbReference type="Gene3D" id="3.10.20.300">
    <property type="entry name" value="mk0293 like domain"/>
    <property type="match status" value="1"/>
</dbReference>
<dbReference type="Gene3D" id="3.30.70.1380">
    <property type="entry name" value="Transcriptional regulatory protein pf0864 domain like"/>
    <property type="match status" value="1"/>
</dbReference>
<dbReference type="HAMAP" id="MF_01074">
    <property type="entry name" value="LarC"/>
    <property type="match status" value="1"/>
</dbReference>
<dbReference type="InterPro" id="IPR002822">
    <property type="entry name" value="Ni_insertion"/>
</dbReference>
<dbReference type="NCBIfam" id="TIGR00299">
    <property type="entry name" value="nickel pincer cofactor biosynthesis protein LarC"/>
    <property type="match status" value="1"/>
</dbReference>
<dbReference type="PANTHER" id="PTHR36566">
    <property type="entry name" value="NICKEL INSERTION PROTEIN-RELATED"/>
    <property type="match status" value="1"/>
</dbReference>
<dbReference type="PANTHER" id="PTHR36566:SF1">
    <property type="entry name" value="PYRIDINIUM-3,5-BISTHIOCARBOXYLIC ACID MONONUCLEOTIDE NICKEL INSERTION PROTEIN"/>
    <property type="match status" value="1"/>
</dbReference>
<dbReference type="Pfam" id="PF01969">
    <property type="entry name" value="Ni_insertion"/>
    <property type="match status" value="1"/>
</dbReference>
<comment type="similarity">
    <text evidence="1">Belongs to the LarC family.</text>
</comment>
<accession>B9KXX3</accession>
<gene>
    <name type="ordered locus">trd_0315</name>
</gene>